<sequence length="390" mass="43700">MKRVFLIVLDSVGIGEMPDAANYKDEGSNTLKAAAKSEFFSTPNLEKLGLFHMDGLTDMANSKVVPQATYARMNEASKGKDTTIGHWEISGIISEKPLPTFPEGFPKELLDEFEKRTGRKVICNKPYSGTEVIKDYGKEHVETGALIVYTSADSVFQIAAHEGVVPIEELYRYCEIAREICKGPTGVGRVIARPFEGEYPDYRRTAKRHDYSLQPPRDTMLNQLKEAGYSVLAVGKINDIFAGSGVTEMVYTKNNAEGIEETLKYQKKEFEGLCFVNLVDFDMVYGHRNDVDGYAKALSYFDEQLPRFLESMQEEDILMITADHGCDPSTPSTDHSREYTPLIVYGNQIKGNTNLGTRKTFADIGSAILEYFNVPSRIQGESFLEECMKK</sequence>
<evidence type="ECO:0000255" key="1">
    <source>
        <dbReference type="HAMAP-Rule" id="MF_00740"/>
    </source>
</evidence>
<name>DEOB_LACP7</name>
<dbReference type="EC" id="5.4.2.7" evidence="1"/>
<dbReference type="EMBL" id="CP000885">
    <property type="protein sequence ID" value="ABX44066.1"/>
    <property type="molecule type" value="Genomic_DNA"/>
</dbReference>
<dbReference type="RefSeq" id="WP_012201714.1">
    <property type="nucleotide sequence ID" value="NC_010001.1"/>
</dbReference>
<dbReference type="SMR" id="A9KK75"/>
<dbReference type="STRING" id="357809.Cphy_3719"/>
<dbReference type="KEGG" id="cpy:Cphy_3719"/>
<dbReference type="eggNOG" id="COG1015">
    <property type="taxonomic scope" value="Bacteria"/>
</dbReference>
<dbReference type="HOGENOM" id="CLU_053861_0_0_9"/>
<dbReference type="OrthoDB" id="9769930at2"/>
<dbReference type="UniPathway" id="UPA00002">
    <property type="reaction ID" value="UER00467"/>
</dbReference>
<dbReference type="Proteomes" id="UP000000370">
    <property type="component" value="Chromosome"/>
</dbReference>
<dbReference type="GO" id="GO:0005829">
    <property type="term" value="C:cytosol"/>
    <property type="evidence" value="ECO:0007669"/>
    <property type="project" value="TreeGrafter"/>
</dbReference>
<dbReference type="GO" id="GO:0000287">
    <property type="term" value="F:magnesium ion binding"/>
    <property type="evidence" value="ECO:0007669"/>
    <property type="project" value="InterPro"/>
</dbReference>
<dbReference type="GO" id="GO:0030145">
    <property type="term" value="F:manganese ion binding"/>
    <property type="evidence" value="ECO:0007669"/>
    <property type="project" value="UniProtKB-UniRule"/>
</dbReference>
<dbReference type="GO" id="GO:0008973">
    <property type="term" value="F:phosphopentomutase activity"/>
    <property type="evidence" value="ECO:0007669"/>
    <property type="project" value="UniProtKB-UniRule"/>
</dbReference>
<dbReference type="GO" id="GO:0006018">
    <property type="term" value="P:2-deoxyribose 1-phosphate catabolic process"/>
    <property type="evidence" value="ECO:0007669"/>
    <property type="project" value="UniProtKB-UniRule"/>
</dbReference>
<dbReference type="GO" id="GO:0006015">
    <property type="term" value="P:5-phosphoribose 1-diphosphate biosynthetic process"/>
    <property type="evidence" value="ECO:0007669"/>
    <property type="project" value="UniProtKB-UniPathway"/>
</dbReference>
<dbReference type="GO" id="GO:0043094">
    <property type="term" value="P:metabolic compound salvage"/>
    <property type="evidence" value="ECO:0007669"/>
    <property type="project" value="InterPro"/>
</dbReference>
<dbReference type="GO" id="GO:0009117">
    <property type="term" value="P:nucleotide metabolic process"/>
    <property type="evidence" value="ECO:0007669"/>
    <property type="project" value="InterPro"/>
</dbReference>
<dbReference type="CDD" id="cd16009">
    <property type="entry name" value="PPM"/>
    <property type="match status" value="1"/>
</dbReference>
<dbReference type="FunFam" id="3.30.70.1250:FF:000001">
    <property type="entry name" value="Phosphopentomutase"/>
    <property type="match status" value="1"/>
</dbReference>
<dbReference type="Gene3D" id="3.40.720.10">
    <property type="entry name" value="Alkaline Phosphatase, subunit A"/>
    <property type="match status" value="1"/>
</dbReference>
<dbReference type="Gene3D" id="3.30.70.1250">
    <property type="entry name" value="Phosphopentomutase"/>
    <property type="match status" value="1"/>
</dbReference>
<dbReference type="HAMAP" id="MF_00740">
    <property type="entry name" value="Phosphopentomut"/>
    <property type="match status" value="1"/>
</dbReference>
<dbReference type="InterPro" id="IPR017850">
    <property type="entry name" value="Alkaline_phosphatase_core_sf"/>
</dbReference>
<dbReference type="InterPro" id="IPR010045">
    <property type="entry name" value="DeoB"/>
</dbReference>
<dbReference type="InterPro" id="IPR006124">
    <property type="entry name" value="Metalloenzyme"/>
</dbReference>
<dbReference type="InterPro" id="IPR024052">
    <property type="entry name" value="Phosphopentomutase_DeoB_cap_sf"/>
</dbReference>
<dbReference type="NCBIfam" id="TIGR01696">
    <property type="entry name" value="deoB"/>
    <property type="match status" value="1"/>
</dbReference>
<dbReference type="NCBIfam" id="NF003766">
    <property type="entry name" value="PRK05362.1"/>
    <property type="match status" value="1"/>
</dbReference>
<dbReference type="PANTHER" id="PTHR21110">
    <property type="entry name" value="PHOSPHOPENTOMUTASE"/>
    <property type="match status" value="1"/>
</dbReference>
<dbReference type="PANTHER" id="PTHR21110:SF0">
    <property type="entry name" value="PHOSPHOPENTOMUTASE"/>
    <property type="match status" value="1"/>
</dbReference>
<dbReference type="Pfam" id="PF01676">
    <property type="entry name" value="Metalloenzyme"/>
    <property type="match status" value="1"/>
</dbReference>
<dbReference type="PIRSF" id="PIRSF001491">
    <property type="entry name" value="Ppentomutase"/>
    <property type="match status" value="1"/>
</dbReference>
<dbReference type="SUPFAM" id="SSF53649">
    <property type="entry name" value="Alkaline phosphatase-like"/>
    <property type="match status" value="1"/>
</dbReference>
<dbReference type="SUPFAM" id="SSF143856">
    <property type="entry name" value="DeoB insert domain-like"/>
    <property type="match status" value="1"/>
</dbReference>
<keyword id="KW-0963">Cytoplasm</keyword>
<keyword id="KW-0413">Isomerase</keyword>
<keyword id="KW-0464">Manganese</keyword>
<keyword id="KW-0479">Metal-binding</keyword>
<keyword id="KW-1185">Reference proteome</keyword>
<comment type="function">
    <text evidence="1">Isomerase that catalyzes the conversion of deoxy-ribose 1-phosphate (dRib-1-P) and ribose 1-phosphate (Rib-1-P) to deoxy-ribose 5-phosphate (dRib-5-P) and ribose 5-phosphate (Rib-5-P), respectively.</text>
</comment>
<comment type="catalytic activity">
    <reaction evidence="1">
        <text>2-deoxy-alpha-D-ribose 1-phosphate = 2-deoxy-D-ribose 5-phosphate</text>
        <dbReference type="Rhea" id="RHEA:27658"/>
        <dbReference type="ChEBI" id="CHEBI:57259"/>
        <dbReference type="ChEBI" id="CHEBI:62877"/>
        <dbReference type="EC" id="5.4.2.7"/>
    </reaction>
</comment>
<comment type="catalytic activity">
    <reaction evidence="1">
        <text>alpha-D-ribose 1-phosphate = D-ribose 5-phosphate</text>
        <dbReference type="Rhea" id="RHEA:18793"/>
        <dbReference type="ChEBI" id="CHEBI:57720"/>
        <dbReference type="ChEBI" id="CHEBI:78346"/>
        <dbReference type="EC" id="5.4.2.7"/>
    </reaction>
</comment>
<comment type="cofactor">
    <cofactor evidence="1">
        <name>Mn(2+)</name>
        <dbReference type="ChEBI" id="CHEBI:29035"/>
    </cofactor>
    <text evidence="1">Binds 2 manganese ions.</text>
</comment>
<comment type="pathway">
    <text evidence="1">Carbohydrate degradation; 2-deoxy-D-ribose 1-phosphate degradation; D-glyceraldehyde 3-phosphate and acetaldehyde from 2-deoxy-alpha-D-ribose 1-phosphate: step 1/2.</text>
</comment>
<comment type="subcellular location">
    <subcellularLocation>
        <location evidence="1">Cytoplasm</location>
    </subcellularLocation>
</comment>
<comment type="similarity">
    <text evidence="1">Belongs to the phosphopentomutase family.</text>
</comment>
<reference key="1">
    <citation type="submission" date="2007-11" db="EMBL/GenBank/DDBJ databases">
        <title>Complete genome sequence of Clostridium phytofermentans ISDg.</title>
        <authorList>
            <person name="Leschine S.B."/>
            <person name="Warnick T.A."/>
            <person name="Blanchard J.L."/>
            <person name="Schnell D.J."/>
            <person name="Petit E.L."/>
            <person name="LaTouf W.G."/>
            <person name="Copeland A."/>
            <person name="Lucas S."/>
            <person name="Lapidus A."/>
            <person name="Barry K."/>
            <person name="Glavina del Rio T."/>
            <person name="Dalin E."/>
            <person name="Tice H."/>
            <person name="Pitluck S."/>
            <person name="Kiss H."/>
            <person name="Brettin T."/>
            <person name="Bruce D."/>
            <person name="Detter J.C."/>
            <person name="Han C."/>
            <person name="Kuske C."/>
            <person name="Schmutz J."/>
            <person name="Larimer F."/>
            <person name="Land M."/>
            <person name="Hauser L."/>
            <person name="Kyrpides N."/>
            <person name="Kim E.A."/>
            <person name="Richardson P."/>
        </authorList>
    </citation>
    <scope>NUCLEOTIDE SEQUENCE [LARGE SCALE GENOMIC DNA]</scope>
    <source>
        <strain>ATCC 700394 / DSM 18823 / ISDg</strain>
    </source>
</reference>
<feature type="chain" id="PRO_1000083436" description="Phosphopentomutase">
    <location>
        <begin position="1"/>
        <end position="390"/>
    </location>
</feature>
<feature type="binding site" evidence="1">
    <location>
        <position position="10"/>
    </location>
    <ligand>
        <name>Mn(2+)</name>
        <dbReference type="ChEBI" id="CHEBI:29035"/>
        <label>1</label>
    </ligand>
</feature>
<feature type="binding site" evidence="1">
    <location>
        <position position="282"/>
    </location>
    <ligand>
        <name>Mn(2+)</name>
        <dbReference type="ChEBI" id="CHEBI:29035"/>
        <label>2</label>
    </ligand>
</feature>
<feature type="binding site" evidence="1">
    <location>
        <position position="287"/>
    </location>
    <ligand>
        <name>Mn(2+)</name>
        <dbReference type="ChEBI" id="CHEBI:29035"/>
        <label>2</label>
    </ligand>
</feature>
<feature type="binding site" evidence="1">
    <location>
        <position position="323"/>
    </location>
    <ligand>
        <name>Mn(2+)</name>
        <dbReference type="ChEBI" id="CHEBI:29035"/>
        <label>1</label>
    </ligand>
</feature>
<feature type="binding site" evidence="1">
    <location>
        <position position="324"/>
    </location>
    <ligand>
        <name>Mn(2+)</name>
        <dbReference type="ChEBI" id="CHEBI:29035"/>
        <label>1</label>
    </ligand>
</feature>
<feature type="binding site" evidence="1">
    <location>
        <position position="335"/>
    </location>
    <ligand>
        <name>Mn(2+)</name>
        <dbReference type="ChEBI" id="CHEBI:29035"/>
        <label>2</label>
    </ligand>
</feature>
<proteinExistence type="inferred from homology"/>
<protein>
    <recommendedName>
        <fullName evidence="1">Phosphopentomutase</fullName>
        <ecNumber evidence="1">5.4.2.7</ecNumber>
    </recommendedName>
    <alternativeName>
        <fullName evidence="1">Phosphodeoxyribomutase</fullName>
    </alternativeName>
</protein>
<gene>
    <name evidence="1" type="primary">deoB</name>
    <name type="ordered locus">Cphy_3719</name>
</gene>
<accession>A9KK75</accession>
<organism>
    <name type="scientific">Lachnoclostridium phytofermentans (strain ATCC 700394 / DSM 18823 / ISDg)</name>
    <name type="common">Clostridium phytofermentans</name>
    <dbReference type="NCBI Taxonomy" id="357809"/>
    <lineage>
        <taxon>Bacteria</taxon>
        <taxon>Bacillati</taxon>
        <taxon>Bacillota</taxon>
        <taxon>Clostridia</taxon>
        <taxon>Lachnospirales</taxon>
        <taxon>Lachnospiraceae</taxon>
    </lineage>
</organism>